<geneLocation type="mitochondrion"/>
<keyword id="KW-0249">Electron transport</keyword>
<keyword id="KW-0472">Membrane</keyword>
<keyword id="KW-0496">Mitochondrion</keyword>
<keyword id="KW-0999">Mitochondrion inner membrane</keyword>
<keyword id="KW-0520">NAD</keyword>
<keyword id="KW-0679">Respiratory chain</keyword>
<keyword id="KW-1278">Translocase</keyword>
<keyword id="KW-0812">Transmembrane</keyword>
<keyword id="KW-1133">Transmembrane helix</keyword>
<keyword id="KW-0813">Transport</keyword>
<keyword id="KW-0830">Ubiquinone</keyword>
<accession>O48358</accession>
<dbReference type="EC" id="7.1.1.2"/>
<dbReference type="EMBL" id="AF036377">
    <property type="protein sequence ID" value="AAB97890.1"/>
    <property type="molecule type" value="Genomic_DNA"/>
</dbReference>
<dbReference type="EMBL" id="AF036379">
    <property type="protein sequence ID" value="AAB97892.1"/>
    <property type="molecule type" value="Genomic_DNA"/>
</dbReference>
<dbReference type="SMR" id="O48358"/>
<dbReference type="GO" id="GO:0005743">
    <property type="term" value="C:mitochondrial inner membrane"/>
    <property type="evidence" value="ECO:0007669"/>
    <property type="project" value="UniProtKB-SubCell"/>
</dbReference>
<dbReference type="GO" id="GO:0008137">
    <property type="term" value="F:NADH dehydrogenase (ubiquinone) activity"/>
    <property type="evidence" value="ECO:0007669"/>
    <property type="project" value="UniProtKB-EC"/>
</dbReference>
<dbReference type="GO" id="GO:0009060">
    <property type="term" value="P:aerobic respiration"/>
    <property type="evidence" value="ECO:0007669"/>
    <property type="project" value="TreeGrafter"/>
</dbReference>
<dbReference type="HAMAP" id="MF_01350">
    <property type="entry name" value="NDH1_NuoH"/>
    <property type="match status" value="1"/>
</dbReference>
<dbReference type="InterPro" id="IPR001694">
    <property type="entry name" value="NADH_UbQ_OxRdtase_su1/FPO"/>
</dbReference>
<dbReference type="InterPro" id="IPR018086">
    <property type="entry name" value="NADH_UbQ_OxRdtase_su1_CS"/>
</dbReference>
<dbReference type="PANTHER" id="PTHR11432">
    <property type="entry name" value="NADH DEHYDROGENASE SUBUNIT 1"/>
    <property type="match status" value="1"/>
</dbReference>
<dbReference type="PANTHER" id="PTHR11432:SF3">
    <property type="entry name" value="NADH-UBIQUINONE OXIDOREDUCTASE CHAIN 1"/>
    <property type="match status" value="1"/>
</dbReference>
<dbReference type="Pfam" id="PF00146">
    <property type="entry name" value="NADHdh"/>
    <property type="match status" value="1"/>
</dbReference>
<dbReference type="PROSITE" id="PS00667">
    <property type="entry name" value="COMPLEX1_ND1_1"/>
    <property type="match status" value="1"/>
</dbReference>
<dbReference type="PROSITE" id="PS00668">
    <property type="entry name" value="COMPLEX1_ND1_2"/>
    <property type="match status" value="1"/>
</dbReference>
<proteinExistence type="inferred from homology"/>
<gene>
    <name type="primary">MT-ND1</name>
    <name type="synonym">MTND1</name>
    <name type="synonym">NADH1</name>
    <name type="synonym">ND1</name>
</gene>
<protein>
    <recommendedName>
        <fullName>NADH-ubiquinone oxidoreductase chain 1</fullName>
        <ecNumber>7.1.1.2</ecNumber>
    </recommendedName>
    <alternativeName>
        <fullName>NADH dehydrogenase subunit 1</fullName>
    </alternativeName>
</protein>
<evidence type="ECO:0000250" key="1"/>
<evidence type="ECO:0000255" key="2"/>
<evidence type="ECO:0000305" key="3"/>
<feature type="chain" id="PRO_0000117489" description="NADH-ubiquinone oxidoreductase chain 1">
    <location>
        <begin position="1"/>
        <end position="324"/>
    </location>
</feature>
<feature type="transmembrane region" description="Helical" evidence="2">
    <location>
        <begin position="9"/>
        <end position="29"/>
    </location>
</feature>
<feature type="transmembrane region" description="Helical" evidence="2">
    <location>
        <begin position="75"/>
        <end position="95"/>
    </location>
</feature>
<feature type="transmembrane region" description="Helical" evidence="2">
    <location>
        <begin position="106"/>
        <end position="126"/>
    </location>
</feature>
<feature type="transmembrane region" description="Helical" evidence="2">
    <location>
        <begin position="146"/>
        <end position="166"/>
    </location>
</feature>
<feature type="transmembrane region" description="Helical" evidence="2">
    <location>
        <begin position="177"/>
        <end position="197"/>
    </location>
</feature>
<feature type="transmembrane region" description="Helical" evidence="2">
    <location>
        <begin position="237"/>
        <end position="257"/>
    </location>
</feature>
<feature type="transmembrane region" description="Helical" evidence="2">
    <location>
        <begin position="259"/>
        <end position="279"/>
    </location>
</feature>
<feature type="transmembrane region" description="Helical" evidence="2">
    <location>
        <begin position="299"/>
        <end position="319"/>
    </location>
</feature>
<comment type="function">
    <text evidence="1">Core subunit of the mitochondrial membrane respiratory chain NADH dehydrogenase (Complex I) that is believed to belong to the minimal assembly required for catalysis. Complex I functions in the transfer of electrons from NADH to the respiratory chain. The immediate electron acceptor for the enzyme is believed to be ubiquinone (By similarity).</text>
</comment>
<comment type="catalytic activity">
    <reaction>
        <text>a ubiquinone + NADH + 5 H(+)(in) = a ubiquinol + NAD(+) + 4 H(+)(out)</text>
        <dbReference type="Rhea" id="RHEA:29091"/>
        <dbReference type="Rhea" id="RHEA-COMP:9565"/>
        <dbReference type="Rhea" id="RHEA-COMP:9566"/>
        <dbReference type="ChEBI" id="CHEBI:15378"/>
        <dbReference type="ChEBI" id="CHEBI:16389"/>
        <dbReference type="ChEBI" id="CHEBI:17976"/>
        <dbReference type="ChEBI" id="CHEBI:57540"/>
        <dbReference type="ChEBI" id="CHEBI:57945"/>
        <dbReference type="EC" id="7.1.1.2"/>
    </reaction>
</comment>
<comment type="subcellular location">
    <subcellularLocation>
        <location evidence="1">Mitochondrion inner membrane</location>
        <topology evidence="1">Multi-pass membrane protein</topology>
    </subcellularLocation>
</comment>
<comment type="similarity">
    <text evidence="3">Belongs to the complex I subunit 1 family.</text>
</comment>
<organism>
    <name type="scientific">Thymallus arcticus</name>
    <name type="common">Arctic grayling</name>
    <name type="synonym">Salmo arcticus</name>
    <dbReference type="NCBI Taxonomy" id="70285"/>
    <lineage>
        <taxon>Eukaryota</taxon>
        <taxon>Metazoa</taxon>
        <taxon>Chordata</taxon>
        <taxon>Craniata</taxon>
        <taxon>Vertebrata</taxon>
        <taxon>Euteleostomi</taxon>
        <taxon>Actinopterygii</taxon>
        <taxon>Neopterygii</taxon>
        <taxon>Teleostei</taxon>
        <taxon>Protacanthopterygii</taxon>
        <taxon>Salmoniformes</taxon>
        <taxon>Salmonidae</taxon>
        <taxon>Thymallinae</taxon>
        <taxon>Thymallus</taxon>
    </lineage>
</organism>
<name>NU1M_THYAR</name>
<reference key="1">
    <citation type="submission" date="1998-01" db="EMBL/GenBank/DDBJ databases">
        <title>Zoogeographical implications of variation in mitochondrial DNA within and among isolated populations of Arctic grayling (Thymallus arcticus).</title>
        <authorList>
            <person name="Redenbach Z."/>
            <person name="Taylor E.B."/>
        </authorList>
    </citation>
    <scope>NUCLEOTIDE SEQUENCE [GENOMIC DNA]</scope>
    <source>
        <strain>Haplotype 2 / Alaska</strain>
        <strain>Haplotype 4 / Common Alaska/B.C.</strain>
    </source>
</reference>
<sequence>MITTLITHVLNPLAYIVPVLLAVAFLTLLERKVLGYMQLRKGPNIVGPYGLLQPIADGLKLFIKEPVRPSTSSPFLFLATPMLALTLALTLWAPMPIPYPVTDLNLGVLFVLALSSLAVYSILGSGWASNSKYALIGALRAVAQTISYEVSLGLILLSVIIFTGGFTLQTFNIAQESIWLVVPAWPLAALWYISTLAETNRAPFDFTEGESELVSGFNVEYAGGPFALFFLAEYANILLMNTLSAILFLGATHIPALPELTAMNLMTKAALLSVVFLWVRASYPRFRYDQLMHLVWKSFLPMTLALVLWHLALPIALAGLPPQI</sequence>